<name>CEMA_AETGR</name>
<protein>
    <recommendedName>
        <fullName evidence="1">Potassium/proton antiporter CemA</fullName>
    </recommendedName>
    <alternativeName>
        <fullName evidence="1">Chloroplast envelope membrane protein A</fullName>
        <shortName evidence="1">CemA</shortName>
    </alternativeName>
</protein>
<accession>A4QJL1</accession>
<feature type="chain" id="PRO_0000293509" description="Potassium/proton antiporter CemA">
    <location>
        <begin position="1"/>
        <end position="229"/>
    </location>
</feature>
<feature type="transmembrane region" description="Helical" evidence="1">
    <location>
        <begin position="6"/>
        <end position="26"/>
    </location>
</feature>
<feature type="transmembrane region" description="Helical" evidence="1">
    <location>
        <begin position="107"/>
        <end position="127"/>
    </location>
</feature>
<feature type="transmembrane region" description="Helical" evidence="1">
    <location>
        <begin position="152"/>
        <end position="172"/>
    </location>
</feature>
<feature type="transmembrane region" description="Helical" evidence="1">
    <location>
        <begin position="189"/>
        <end position="209"/>
    </location>
</feature>
<organism>
    <name type="scientific">Aethionema grandiflorum</name>
    <name type="common">Persian stone-cress</name>
    <dbReference type="NCBI Taxonomy" id="72657"/>
    <lineage>
        <taxon>Eukaryota</taxon>
        <taxon>Viridiplantae</taxon>
        <taxon>Streptophyta</taxon>
        <taxon>Embryophyta</taxon>
        <taxon>Tracheophyta</taxon>
        <taxon>Spermatophyta</taxon>
        <taxon>Magnoliopsida</taxon>
        <taxon>eudicotyledons</taxon>
        <taxon>Gunneridae</taxon>
        <taxon>Pentapetalae</taxon>
        <taxon>rosids</taxon>
        <taxon>malvids</taxon>
        <taxon>Brassicales</taxon>
        <taxon>Brassicaceae</taxon>
        <taxon>Aethionemeae</taxon>
        <taxon>Aethionema</taxon>
    </lineage>
</organism>
<proteinExistence type="inferred from homology"/>
<dbReference type="EMBL" id="AP009367">
    <property type="protein sequence ID" value="BAF49866.1"/>
    <property type="molecule type" value="Genomic_DNA"/>
</dbReference>
<dbReference type="RefSeq" id="YP_001123042.1">
    <property type="nucleotide sequence ID" value="NC_009266.1"/>
</dbReference>
<dbReference type="GeneID" id="4962243"/>
<dbReference type="GO" id="GO:0009706">
    <property type="term" value="C:chloroplast inner membrane"/>
    <property type="evidence" value="ECO:0007669"/>
    <property type="project" value="UniProtKB-SubCell"/>
</dbReference>
<dbReference type="GO" id="GO:0015297">
    <property type="term" value="F:antiporter activity"/>
    <property type="evidence" value="ECO:0007669"/>
    <property type="project" value="UniProtKB-KW"/>
</dbReference>
<dbReference type="GO" id="GO:0015078">
    <property type="term" value="F:proton transmembrane transporter activity"/>
    <property type="evidence" value="ECO:0007669"/>
    <property type="project" value="UniProtKB-UniRule"/>
</dbReference>
<dbReference type="GO" id="GO:0006813">
    <property type="term" value="P:potassium ion transport"/>
    <property type="evidence" value="ECO:0007669"/>
    <property type="project" value="UniProtKB-UniRule"/>
</dbReference>
<dbReference type="HAMAP" id="MF_01308">
    <property type="entry name" value="CemA_PxcA"/>
    <property type="match status" value="1"/>
</dbReference>
<dbReference type="InterPro" id="IPR004282">
    <property type="entry name" value="CemA"/>
</dbReference>
<dbReference type="PANTHER" id="PTHR33650:SF2">
    <property type="entry name" value="CHLOROPLAST ENVELOPE MEMBRANE PROTEIN"/>
    <property type="match status" value="1"/>
</dbReference>
<dbReference type="PANTHER" id="PTHR33650">
    <property type="entry name" value="CHLOROPLAST ENVELOPE MEMBRANE PROTEIN-RELATED"/>
    <property type="match status" value="1"/>
</dbReference>
<dbReference type="Pfam" id="PF03040">
    <property type="entry name" value="CemA"/>
    <property type="match status" value="1"/>
</dbReference>
<reference key="1">
    <citation type="submission" date="2007-03" db="EMBL/GenBank/DDBJ databases">
        <title>Sequencing analysis of Aethionema grandiflorum chloroplast DNA.</title>
        <authorList>
            <person name="Hosouchi T."/>
            <person name="Tsuruoka H."/>
            <person name="Kotani H."/>
        </authorList>
    </citation>
    <scope>NUCLEOTIDE SEQUENCE [LARGE SCALE GENOMIC DNA]</scope>
</reference>
<sequence length="229" mass="27663">MAKKKAFIPFLYFISIVFFPWWISLCCNKSLKTWITNWWNTRQCETFLNEIQEKSLLEKFIQLEELFQLDEMLKEYPETDLQKFRLEIHKETIQFIKIHNEYRIHTIFHFSTNLISFVILSSYSFWGKEKLFILNSWVQEFLYNLSDTIKAFLILLLTDLCIGFHSPHGWELMIGYIYKDFGFAHYEQILSGLVSTFPVILDTIFKYWIFRYLNRVSPSLVVIYHAIND</sequence>
<keyword id="KW-0050">Antiport</keyword>
<keyword id="KW-0150">Chloroplast</keyword>
<keyword id="KW-0375">Hydrogen ion transport</keyword>
<keyword id="KW-0406">Ion transport</keyword>
<keyword id="KW-0472">Membrane</keyword>
<keyword id="KW-0934">Plastid</keyword>
<keyword id="KW-1001">Plastid inner membrane</keyword>
<keyword id="KW-0630">Potassium</keyword>
<keyword id="KW-0633">Potassium transport</keyword>
<keyword id="KW-0812">Transmembrane</keyword>
<keyword id="KW-1133">Transmembrane helix</keyword>
<keyword id="KW-0813">Transport</keyword>
<gene>
    <name evidence="1" type="primary">cemA</name>
    <name type="synonym">ycf10</name>
</gene>
<evidence type="ECO:0000255" key="1">
    <source>
        <dbReference type="HAMAP-Rule" id="MF_01308"/>
    </source>
</evidence>
<evidence type="ECO:0000305" key="2"/>
<comment type="function">
    <text evidence="1">Contributes to K(+)/H(+) antiport activity by supporting proton efflux to control proton extrusion and homeostasis in chloroplasts in a light-dependent manner to modulate photosynthesis. Prevents excessive induction of non-photochemical quenching (NPQ) under continuous-light conditions. Indirectly promotes efficient inorganic carbon uptake into chloroplasts.</text>
</comment>
<comment type="catalytic activity">
    <reaction evidence="1">
        <text>K(+)(in) + H(+)(out) = K(+)(out) + H(+)(in)</text>
        <dbReference type="Rhea" id="RHEA:29467"/>
        <dbReference type="ChEBI" id="CHEBI:15378"/>
        <dbReference type="ChEBI" id="CHEBI:29103"/>
    </reaction>
</comment>
<comment type="subcellular location">
    <subcellularLocation>
        <location evidence="1">Plastid</location>
        <location evidence="1">Chloroplast inner membrane</location>
        <topology evidence="1">Multi-pass membrane protein</topology>
    </subcellularLocation>
</comment>
<comment type="similarity">
    <text evidence="1 2">Belongs to the CemA family.</text>
</comment>
<geneLocation type="chloroplast"/>